<proteinExistence type="evidence at transcript level"/>
<reference key="1">
    <citation type="journal article" date="1998" name="Biochim. Biophys. Acta">
        <title>Evolutionary analysis of G-proteins in early metazoans: cloning of alpha- and beta-subunits from the sponge Geodia cydonium.</title>
        <authorList>
            <person name="Seack J."/>
            <person name="Kruse M."/>
            <person name="Mueller W.E.G."/>
        </authorList>
    </citation>
    <scope>NUCLEOTIDE SEQUENCE [MRNA]</scope>
</reference>
<accession>Q9XZV4</accession>
<organism>
    <name type="scientific">Geodia cydonium</name>
    <name type="common">Sponge</name>
    <dbReference type="NCBI Taxonomy" id="6047"/>
    <lineage>
        <taxon>Eukaryota</taxon>
        <taxon>Metazoa</taxon>
        <taxon>Porifera</taxon>
        <taxon>Demospongiae</taxon>
        <taxon>Heteroscleromorpha</taxon>
        <taxon>Tetractinellida</taxon>
        <taxon>Astrophorina</taxon>
        <taxon>Geodiidae</taxon>
        <taxon>Geodia</taxon>
    </lineage>
</organism>
<dbReference type="EMBL" id="Y14248">
    <property type="protein sequence ID" value="CAB43527.1"/>
    <property type="molecule type" value="mRNA"/>
</dbReference>
<dbReference type="SMR" id="Q9XZV4"/>
<dbReference type="GO" id="GO:0005737">
    <property type="term" value="C:cytoplasm"/>
    <property type="evidence" value="ECO:0007669"/>
    <property type="project" value="TreeGrafter"/>
</dbReference>
<dbReference type="GO" id="GO:0005834">
    <property type="term" value="C:heterotrimeric G-protein complex"/>
    <property type="evidence" value="ECO:0007669"/>
    <property type="project" value="TreeGrafter"/>
</dbReference>
<dbReference type="GO" id="GO:0001664">
    <property type="term" value="F:G protein-coupled receptor binding"/>
    <property type="evidence" value="ECO:0007669"/>
    <property type="project" value="InterPro"/>
</dbReference>
<dbReference type="GO" id="GO:0031683">
    <property type="term" value="F:G-protein beta/gamma-subunit complex binding"/>
    <property type="evidence" value="ECO:0007669"/>
    <property type="project" value="InterPro"/>
</dbReference>
<dbReference type="GO" id="GO:0005525">
    <property type="term" value="F:GTP binding"/>
    <property type="evidence" value="ECO:0007669"/>
    <property type="project" value="UniProtKB-KW"/>
</dbReference>
<dbReference type="GO" id="GO:0003924">
    <property type="term" value="F:GTPase activity"/>
    <property type="evidence" value="ECO:0007669"/>
    <property type="project" value="InterPro"/>
</dbReference>
<dbReference type="GO" id="GO:0046872">
    <property type="term" value="F:metal ion binding"/>
    <property type="evidence" value="ECO:0007669"/>
    <property type="project" value="UniProtKB-KW"/>
</dbReference>
<dbReference type="GO" id="GO:0007188">
    <property type="term" value="P:adenylate cyclase-modulating G protein-coupled receptor signaling pathway"/>
    <property type="evidence" value="ECO:0007669"/>
    <property type="project" value="TreeGrafter"/>
</dbReference>
<dbReference type="CDD" id="cd00066">
    <property type="entry name" value="G-alpha"/>
    <property type="match status" value="1"/>
</dbReference>
<dbReference type="FunFam" id="3.40.50.300:FF:003977">
    <property type="entry name" value="Guanine nucleotide-binding protein G(q) subunit alpha"/>
    <property type="match status" value="1"/>
</dbReference>
<dbReference type="FunFam" id="1.10.400.10:FF:000002">
    <property type="entry name" value="guanine nucleotide-binding protein G(Q) subunit alpha"/>
    <property type="match status" value="1"/>
</dbReference>
<dbReference type="FunFam" id="3.40.50.300:FF:000692">
    <property type="entry name" value="Guanine nucleotide-binding protein subunit alpha"/>
    <property type="match status" value="1"/>
</dbReference>
<dbReference type="Gene3D" id="1.10.400.10">
    <property type="entry name" value="GI Alpha 1, domain 2-like"/>
    <property type="match status" value="1"/>
</dbReference>
<dbReference type="Gene3D" id="3.40.50.300">
    <property type="entry name" value="P-loop containing nucleotide triphosphate hydrolases"/>
    <property type="match status" value="1"/>
</dbReference>
<dbReference type="InterPro" id="IPR000654">
    <property type="entry name" value="Gprotein_alpha_Q"/>
</dbReference>
<dbReference type="InterPro" id="IPR001019">
    <property type="entry name" value="Gprotein_alpha_su"/>
</dbReference>
<dbReference type="InterPro" id="IPR011025">
    <property type="entry name" value="GproteinA_insert"/>
</dbReference>
<dbReference type="InterPro" id="IPR027417">
    <property type="entry name" value="P-loop_NTPase"/>
</dbReference>
<dbReference type="PANTHER" id="PTHR10218">
    <property type="entry name" value="GTP-BINDING PROTEIN ALPHA SUBUNIT"/>
    <property type="match status" value="1"/>
</dbReference>
<dbReference type="PANTHER" id="PTHR10218:SF329">
    <property type="entry name" value="GUANINE NUCLEOTIDE-BINDING PROTEIN G(Q) SUBUNIT ALPHA"/>
    <property type="match status" value="1"/>
</dbReference>
<dbReference type="Pfam" id="PF00503">
    <property type="entry name" value="G-alpha"/>
    <property type="match status" value="1"/>
</dbReference>
<dbReference type="PRINTS" id="PR00318">
    <property type="entry name" value="GPROTEINA"/>
</dbReference>
<dbReference type="PRINTS" id="PR00442">
    <property type="entry name" value="GPROTEINAQ"/>
</dbReference>
<dbReference type="SMART" id="SM00275">
    <property type="entry name" value="G_alpha"/>
    <property type="match status" value="1"/>
</dbReference>
<dbReference type="SUPFAM" id="SSF52540">
    <property type="entry name" value="P-loop containing nucleoside triphosphate hydrolases"/>
    <property type="match status" value="1"/>
</dbReference>
<dbReference type="SUPFAM" id="SSF47895">
    <property type="entry name" value="Transducin (alpha subunit), insertion domain"/>
    <property type="match status" value="1"/>
</dbReference>
<dbReference type="PROSITE" id="PS51882">
    <property type="entry name" value="G_ALPHA"/>
    <property type="match status" value="1"/>
</dbReference>
<comment type="function">
    <text>Guanine nucleotide-binding proteins (G proteins) are involved as modulators or transducers in various transmembrane signaling systems.</text>
</comment>
<comment type="subunit">
    <text>G proteins are composed of 3 units; alpha, beta and gamma. The alpha chain contains the guanine nucleotide binding site.</text>
</comment>
<comment type="similarity">
    <text evidence="4">Belongs to the G-alpha family. G(q) subfamily.</text>
</comment>
<feature type="chain" id="PRO_0000203764" description="Guanine nucleotide-binding protein G(q) subunit alpha">
    <location>
        <begin position="1"/>
        <end position="355"/>
    </location>
</feature>
<feature type="domain" description="G-alpha" evidence="3">
    <location>
        <begin position="32"/>
        <end position="355"/>
    </location>
</feature>
<feature type="region of interest" description="G1 motif" evidence="3">
    <location>
        <begin position="35"/>
        <end position="48"/>
    </location>
</feature>
<feature type="region of interest" description="G2 motif" evidence="3">
    <location>
        <begin position="172"/>
        <end position="180"/>
    </location>
</feature>
<feature type="region of interest" description="G3 motif" evidence="3">
    <location>
        <begin position="195"/>
        <end position="204"/>
    </location>
</feature>
<feature type="region of interest" description="G4 motif" evidence="3">
    <location>
        <begin position="265"/>
        <end position="272"/>
    </location>
</feature>
<feature type="region of interest" description="G5 motif" evidence="3">
    <location>
        <begin position="324"/>
        <end position="329"/>
    </location>
</feature>
<feature type="binding site" evidence="1">
    <location>
        <begin position="40"/>
        <end position="47"/>
    </location>
    <ligand>
        <name>GTP</name>
        <dbReference type="ChEBI" id="CHEBI:37565"/>
    </ligand>
</feature>
<feature type="binding site" evidence="1">
    <location>
        <position position="47"/>
    </location>
    <ligand>
        <name>Mg(2+)</name>
        <dbReference type="ChEBI" id="CHEBI:18420"/>
    </ligand>
</feature>
<feature type="binding site" evidence="1">
    <location>
        <begin position="174"/>
        <end position="180"/>
    </location>
    <ligand>
        <name>GTP</name>
        <dbReference type="ChEBI" id="CHEBI:37565"/>
    </ligand>
</feature>
<feature type="binding site" evidence="1">
    <location>
        <position position="180"/>
    </location>
    <ligand>
        <name>Mg(2+)</name>
        <dbReference type="ChEBI" id="CHEBI:18420"/>
    </ligand>
</feature>
<feature type="binding site" evidence="1">
    <location>
        <begin position="199"/>
        <end position="203"/>
    </location>
    <ligand>
        <name>GTP</name>
        <dbReference type="ChEBI" id="CHEBI:37565"/>
    </ligand>
</feature>
<feature type="binding site" evidence="1">
    <location>
        <begin position="269"/>
        <end position="272"/>
    </location>
    <ligand>
        <name>GTP</name>
        <dbReference type="ChEBI" id="CHEBI:37565"/>
    </ligand>
</feature>
<feature type="binding site" evidence="1">
    <location>
        <position position="326"/>
    </location>
    <ligand>
        <name>GTP</name>
        <dbReference type="ChEBI" id="CHEBI:37565"/>
    </ligand>
</feature>
<feature type="lipid moiety-binding region" description="S-palmitoyl cysteine" evidence="2">
    <location>
        <position position="3"/>
    </location>
</feature>
<sequence length="355" mass="41364">MSCLLSEEERLQKRINTRINRELQRDHKDAKKEIKLLLLGTGESGKSTFIKQMRIIHGKGYSKQDCLEYKNLVFRNILMSMHSMLQATAELKIAYIDPDAQRHVQLLMALRPETAQSLGGETCEAIRKLWQDAGVQECYQRRNEYQLSDSTKYYLDDLPRISSNDYVPTTQDVLRVRVPTTGINEYPFTINKIIFKMVDVGGQRSERRKWIHCFDHVTSVMFLVAISEYDQILVEADSRVNRMVESLHLFNTIISYPWFNKSSIILFLNKKDLLEEKVMHSHLIDYFEEYDGPKCDHVSARESIAKMFISINDMRSADIYPHFTCATDTENIKFVFDVVKNHILQQHITEVVPGL</sequence>
<evidence type="ECO:0000250" key="1"/>
<evidence type="ECO:0000255" key="2"/>
<evidence type="ECO:0000255" key="3">
    <source>
        <dbReference type="PROSITE-ProRule" id="PRU01230"/>
    </source>
</evidence>
<evidence type="ECO:0000305" key="4"/>
<keyword id="KW-0342">GTP-binding</keyword>
<keyword id="KW-0449">Lipoprotein</keyword>
<keyword id="KW-0460">Magnesium</keyword>
<keyword id="KW-0479">Metal-binding</keyword>
<keyword id="KW-0547">Nucleotide-binding</keyword>
<keyword id="KW-0564">Palmitate</keyword>
<keyword id="KW-0807">Transducer</keyword>
<name>GNAQ_GEOCY</name>
<protein>
    <recommendedName>
        <fullName>Guanine nucleotide-binding protein G(q) subunit alpha</fullName>
    </recommendedName>
    <alternativeName>
        <fullName>Guanine nucleotide-binding protein alpha-q</fullName>
    </alternativeName>
</protein>